<feature type="chain" id="PRO_1000116007" description="Probable GTP-binding protein EngB">
    <location>
        <begin position="1"/>
        <end position="195"/>
    </location>
</feature>
<feature type="domain" description="EngB-type G" evidence="1">
    <location>
        <begin position="24"/>
        <end position="195"/>
    </location>
</feature>
<feature type="binding site" evidence="1">
    <location>
        <begin position="32"/>
        <end position="39"/>
    </location>
    <ligand>
        <name>GTP</name>
        <dbReference type="ChEBI" id="CHEBI:37565"/>
    </ligand>
</feature>
<feature type="binding site" evidence="1">
    <location>
        <position position="39"/>
    </location>
    <ligand>
        <name>Mg(2+)</name>
        <dbReference type="ChEBI" id="CHEBI:18420"/>
    </ligand>
</feature>
<feature type="binding site" evidence="1">
    <location>
        <begin position="59"/>
        <end position="63"/>
    </location>
    <ligand>
        <name>GTP</name>
        <dbReference type="ChEBI" id="CHEBI:37565"/>
    </ligand>
</feature>
<feature type="binding site" evidence="1">
    <location>
        <position position="61"/>
    </location>
    <ligand>
        <name>Mg(2+)</name>
        <dbReference type="ChEBI" id="CHEBI:18420"/>
    </ligand>
</feature>
<feature type="binding site" evidence="1">
    <location>
        <begin position="77"/>
        <end position="80"/>
    </location>
    <ligand>
        <name>GTP</name>
        <dbReference type="ChEBI" id="CHEBI:37565"/>
    </ligand>
</feature>
<feature type="binding site" evidence="1">
    <location>
        <begin position="144"/>
        <end position="147"/>
    </location>
    <ligand>
        <name>GTP</name>
        <dbReference type="ChEBI" id="CHEBI:37565"/>
    </ligand>
</feature>
<feature type="binding site" evidence="1">
    <location>
        <begin position="176"/>
        <end position="178"/>
    </location>
    <ligand>
        <name>GTP</name>
        <dbReference type="ChEBI" id="CHEBI:37565"/>
    </ligand>
</feature>
<protein>
    <recommendedName>
        <fullName evidence="1">Probable GTP-binding protein EngB</fullName>
    </recommendedName>
</protein>
<reference key="1">
    <citation type="journal article" date="2001" name="Microb. Drug Resist.">
        <title>Annotated draft genomic sequence from a Streptococcus pneumoniae type 19F clinical isolate.</title>
        <authorList>
            <person name="Dopazo J."/>
            <person name="Mendoza A."/>
            <person name="Herrero J."/>
            <person name="Caldara F."/>
            <person name="Humbert Y."/>
            <person name="Friedli L."/>
            <person name="Guerrier M."/>
            <person name="Grand-Schenk E."/>
            <person name="Gandin C."/>
            <person name="de Francesco M."/>
            <person name="Polissi A."/>
            <person name="Buell G."/>
            <person name="Feger G."/>
            <person name="Garcia E."/>
            <person name="Peitsch M."/>
            <person name="Garcia-Bustos J.F."/>
        </authorList>
    </citation>
    <scope>NUCLEOTIDE SEQUENCE [LARGE SCALE GENOMIC DNA]</scope>
    <source>
        <strain>G54</strain>
    </source>
</reference>
<reference key="2">
    <citation type="submission" date="2008-03" db="EMBL/GenBank/DDBJ databases">
        <title>Pneumococcal beta glucoside metabolism investigated by whole genome comparison.</title>
        <authorList>
            <person name="Mulas L."/>
            <person name="Trappetti C."/>
            <person name="Hakenbeck R."/>
            <person name="Iannelli F."/>
            <person name="Pozzi G."/>
            <person name="Davidsen T.M."/>
            <person name="Tettelin H."/>
            <person name="Oggioni M."/>
        </authorList>
    </citation>
    <scope>NUCLEOTIDE SEQUENCE [LARGE SCALE GENOMIC DNA]</scope>
    <source>
        <strain>G54</strain>
    </source>
</reference>
<name>ENGB_STRP4</name>
<evidence type="ECO:0000255" key="1">
    <source>
        <dbReference type="HAMAP-Rule" id="MF_00321"/>
    </source>
</evidence>
<organism>
    <name type="scientific">Streptococcus pneumoniae serotype 19F (strain G54)</name>
    <dbReference type="NCBI Taxonomy" id="512566"/>
    <lineage>
        <taxon>Bacteria</taxon>
        <taxon>Bacillati</taxon>
        <taxon>Bacillota</taxon>
        <taxon>Bacilli</taxon>
        <taxon>Lactobacillales</taxon>
        <taxon>Streptococcaceae</taxon>
        <taxon>Streptococcus</taxon>
    </lineage>
</organism>
<keyword id="KW-0131">Cell cycle</keyword>
<keyword id="KW-0132">Cell division</keyword>
<keyword id="KW-0342">GTP-binding</keyword>
<keyword id="KW-0460">Magnesium</keyword>
<keyword id="KW-0479">Metal-binding</keyword>
<keyword id="KW-0547">Nucleotide-binding</keyword>
<keyword id="KW-0717">Septation</keyword>
<dbReference type="EMBL" id="CP001015">
    <property type="protein sequence ID" value="ACF55361.1"/>
    <property type="molecule type" value="Genomic_DNA"/>
</dbReference>
<dbReference type="SMR" id="B5E6L1"/>
<dbReference type="KEGG" id="spx:SPG_1494"/>
<dbReference type="HOGENOM" id="CLU_033732_3_0_9"/>
<dbReference type="GO" id="GO:0005829">
    <property type="term" value="C:cytosol"/>
    <property type="evidence" value="ECO:0007669"/>
    <property type="project" value="TreeGrafter"/>
</dbReference>
<dbReference type="GO" id="GO:0005525">
    <property type="term" value="F:GTP binding"/>
    <property type="evidence" value="ECO:0007669"/>
    <property type="project" value="UniProtKB-UniRule"/>
</dbReference>
<dbReference type="GO" id="GO:0046872">
    <property type="term" value="F:metal ion binding"/>
    <property type="evidence" value="ECO:0007669"/>
    <property type="project" value="UniProtKB-KW"/>
</dbReference>
<dbReference type="GO" id="GO:0000917">
    <property type="term" value="P:division septum assembly"/>
    <property type="evidence" value="ECO:0007669"/>
    <property type="project" value="UniProtKB-KW"/>
</dbReference>
<dbReference type="CDD" id="cd01876">
    <property type="entry name" value="YihA_EngB"/>
    <property type="match status" value="1"/>
</dbReference>
<dbReference type="FunFam" id="3.40.50.300:FF:000098">
    <property type="entry name" value="Probable GTP-binding protein EngB"/>
    <property type="match status" value="1"/>
</dbReference>
<dbReference type="Gene3D" id="3.40.50.300">
    <property type="entry name" value="P-loop containing nucleotide triphosphate hydrolases"/>
    <property type="match status" value="1"/>
</dbReference>
<dbReference type="HAMAP" id="MF_00321">
    <property type="entry name" value="GTPase_EngB"/>
    <property type="match status" value="1"/>
</dbReference>
<dbReference type="InterPro" id="IPR030393">
    <property type="entry name" value="G_ENGB_dom"/>
</dbReference>
<dbReference type="InterPro" id="IPR006073">
    <property type="entry name" value="GTP-bd"/>
</dbReference>
<dbReference type="InterPro" id="IPR019987">
    <property type="entry name" value="GTP-bd_ribosome_bio_YsxC"/>
</dbReference>
<dbReference type="InterPro" id="IPR027417">
    <property type="entry name" value="P-loop_NTPase"/>
</dbReference>
<dbReference type="NCBIfam" id="TIGR03598">
    <property type="entry name" value="GTPase_YsxC"/>
    <property type="match status" value="1"/>
</dbReference>
<dbReference type="PANTHER" id="PTHR11649:SF13">
    <property type="entry name" value="ENGB-TYPE G DOMAIN-CONTAINING PROTEIN"/>
    <property type="match status" value="1"/>
</dbReference>
<dbReference type="PANTHER" id="PTHR11649">
    <property type="entry name" value="MSS1/TRME-RELATED GTP-BINDING PROTEIN"/>
    <property type="match status" value="1"/>
</dbReference>
<dbReference type="Pfam" id="PF01926">
    <property type="entry name" value="MMR_HSR1"/>
    <property type="match status" value="1"/>
</dbReference>
<dbReference type="PRINTS" id="PR00449">
    <property type="entry name" value="RASTRNSFRMNG"/>
</dbReference>
<dbReference type="SUPFAM" id="SSF52540">
    <property type="entry name" value="P-loop containing nucleoside triphosphate hydrolases"/>
    <property type="match status" value="1"/>
</dbReference>
<dbReference type="PROSITE" id="PS51706">
    <property type="entry name" value="G_ENGB"/>
    <property type="match status" value="1"/>
</dbReference>
<sequence length="195" mass="22273">MELNTHNAEILLSAANKSHYPQDELPEIALAGRSNVGKSSFINTMLNRKNLARTSGKPGKTQLLNFFNIDDKMRFVDVPGYGYARVSKKEREKWGCMIEEYLTTRENLRAVVSLVDLRHDPSADDVQMYEFLKYYEIPVIIVATKADKIPRGKWNKHESAIKKKLNFDPSDDFILFSSVSKAGMDEAWDAILEKL</sequence>
<comment type="function">
    <text evidence="1">Necessary for normal cell division and for the maintenance of normal septation.</text>
</comment>
<comment type="cofactor">
    <cofactor evidence="1">
        <name>Mg(2+)</name>
        <dbReference type="ChEBI" id="CHEBI:18420"/>
    </cofactor>
</comment>
<comment type="similarity">
    <text evidence="1">Belongs to the TRAFAC class TrmE-Era-EngA-EngB-Septin-like GTPase superfamily. EngB GTPase family.</text>
</comment>
<accession>B5E6L1</accession>
<gene>
    <name evidence="1" type="primary">engB</name>
    <name type="ordered locus">SPG_1494</name>
</gene>
<proteinExistence type="inferred from homology"/>